<name>CDPKD_ORYSJ</name>
<keyword id="KW-0025">Alternative splicing</keyword>
<keyword id="KW-0067">ATP-binding</keyword>
<keyword id="KW-0106">Calcium</keyword>
<keyword id="KW-0418">Kinase</keyword>
<keyword id="KW-0449">Lipoprotein</keyword>
<keyword id="KW-0472">Membrane</keyword>
<keyword id="KW-0479">Metal-binding</keyword>
<keyword id="KW-0519">Myristate</keyword>
<keyword id="KW-0547">Nucleotide-binding</keyword>
<keyword id="KW-1185">Reference proteome</keyword>
<keyword id="KW-0677">Repeat</keyword>
<keyword id="KW-0723">Serine/threonine-protein kinase</keyword>
<keyword id="KW-0808">Transferase</keyword>
<protein>
    <recommendedName>
        <fullName evidence="13">Calcium-dependent protein kinase 13</fullName>
        <shortName evidence="13">OsCDPK13</shortName>
        <shortName evidence="12">OsCPK13</shortName>
        <ecNumber evidence="13">2.7.11.1</ecNumber>
    </recommendedName>
    <alternativeName>
        <fullName evidence="11">Calcium-dependent protein kinase OsCDPK7</fullName>
    </alternativeName>
</protein>
<feature type="initiator methionine" description="Removed" evidence="2">
    <location>
        <position position="1"/>
    </location>
</feature>
<feature type="chain" id="PRO_0000437557" description="Calcium-dependent protein kinase 13">
    <location>
        <begin position="2"/>
        <end position="551"/>
    </location>
</feature>
<feature type="domain" description="Protein kinase" evidence="3">
    <location>
        <begin position="88"/>
        <end position="346"/>
    </location>
</feature>
<feature type="domain" description="EF-hand 1" evidence="4">
    <location>
        <begin position="389"/>
        <end position="424"/>
    </location>
</feature>
<feature type="domain" description="EF-hand 2" evidence="4">
    <location>
        <begin position="425"/>
        <end position="460"/>
    </location>
</feature>
<feature type="domain" description="EF-hand 3" evidence="4">
    <location>
        <begin position="461"/>
        <end position="496"/>
    </location>
</feature>
<feature type="domain" description="EF-hand 4" evidence="4">
    <location>
        <begin position="497"/>
        <end position="530"/>
    </location>
</feature>
<feature type="region of interest" description="Disordered" evidence="5">
    <location>
        <begin position="15"/>
        <end position="78"/>
    </location>
</feature>
<feature type="region of interest" description="Autoinhibitory domain" evidence="1">
    <location>
        <begin position="352"/>
        <end position="382"/>
    </location>
</feature>
<feature type="active site" description="Proton acceptor" evidence="3">
    <location>
        <position position="212"/>
    </location>
</feature>
<feature type="binding site" evidence="3">
    <location>
        <begin position="94"/>
        <end position="102"/>
    </location>
    <ligand>
        <name>ATP</name>
        <dbReference type="ChEBI" id="CHEBI:30616"/>
    </ligand>
</feature>
<feature type="binding site" evidence="3">
    <location>
        <position position="117"/>
    </location>
    <ligand>
        <name>ATP</name>
        <dbReference type="ChEBI" id="CHEBI:30616"/>
    </ligand>
</feature>
<feature type="binding site" evidence="4">
    <location>
        <position position="402"/>
    </location>
    <ligand>
        <name>Ca(2+)</name>
        <dbReference type="ChEBI" id="CHEBI:29108"/>
        <label>1</label>
    </ligand>
</feature>
<feature type="binding site" evidence="4">
    <location>
        <position position="404"/>
    </location>
    <ligand>
        <name>Ca(2+)</name>
        <dbReference type="ChEBI" id="CHEBI:29108"/>
        <label>1</label>
    </ligand>
</feature>
<feature type="binding site" evidence="4">
    <location>
        <position position="406"/>
    </location>
    <ligand>
        <name>Ca(2+)</name>
        <dbReference type="ChEBI" id="CHEBI:29108"/>
        <label>1</label>
    </ligand>
</feature>
<feature type="binding site" evidence="4">
    <location>
        <position position="413"/>
    </location>
    <ligand>
        <name>Ca(2+)</name>
        <dbReference type="ChEBI" id="CHEBI:29108"/>
        <label>1</label>
    </ligand>
</feature>
<feature type="binding site" evidence="4">
    <location>
        <position position="438"/>
    </location>
    <ligand>
        <name>Ca(2+)</name>
        <dbReference type="ChEBI" id="CHEBI:29108"/>
        <label>2</label>
    </ligand>
</feature>
<feature type="binding site" evidence="4">
    <location>
        <position position="440"/>
    </location>
    <ligand>
        <name>Ca(2+)</name>
        <dbReference type="ChEBI" id="CHEBI:29108"/>
        <label>2</label>
    </ligand>
</feature>
<feature type="binding site" evidence="4">
    <location>
        <position position="442"/>
    </location>
    <ligand>
        <name>Ca(2+)</name>
        <dbReference type="ChEBI" id="CHEBI:29108"/>
        <label>2</label>
    </ligand>
</feature>
<feature type="binding site" evidence="4">
    <location>
        <position position="444"/>
    </location>
    <ligand>
        <name>Ca(2+)</name>
        <dbReference type="ChEBI" id="CHEBI:29108"/>
        <label>2</label>
    </ligand>
</feature>
<feature type="binding site" evidence="4">
    <location>
        <position position="449"/>
    </location>
    <ligand>
        <name>Ca(2+)</name>
        <dbReference type="ChEBI" id="CHEBI:29108"/>
        <label>2</label>
    </ligand>
</feature>
<feature type="binding site" evidence="4">
    <location>
        <position position="474"/>
    </location>
    <ligand>
        <name>Ca(2+)</name>
        <dbReference type="ChEBI" id="CHEBI:29108"/>
        <label>3</label>
    </ligand>
</feature>
<feature type="binding site" evidence="4">
    <location>
        <position position="476"/>
    </location>
    <ligand>
        <name>Ca(2+)</name>
        <dbReference type="ChEBI" id="CHEBI:29108"/>
        <label>3</label>
    </ligand>
</feature>
<feature type="binding site" evidence="4">
    <location>
        <position position="478"/>
    </location>
    <ligand>
        <name>Ca(2+)</name>
        <dbReference type="ChEBI" id="CHEBI:29108"/>
        <label>3</label>
    </ligand>
</feature>
<feature type="binding site" evidence="4">
    <location>
        <position position="480"/>
    </location>
    <ligand>
        <name>Ca(2+)</name>
        <dbReference type="ChEBI" id="CHEBI:29108"/>
        <label>3</label>
    </ligand>
</feature>
<feature type="binding site" evidence="4">
    <location>
        <position position="485"/>
    </location>
    <ligand>
        <name>Ca(2+)</name>
        <dbReference type="ChEBI" id="CHEBI:29108"/>
        <label>3</label>
    </ligand>
</feature>
<feature type="binding site" evidence="4">
    <location>
        <position position="508"/>
    </location>
    <ligand>
        <name>Ca(2+)</name>
        <dbReference type="ChEBI" id="CHEBI:29108"/>
        <label>4</label>
    </ligand>
</feature>
<feature type="binding site" evidence="4">
    <location>
        <position position="510"/>
    </location>
    <ligand>
        <name>Ca(2+)</name>
        <dbReference type="ChEBI" id="CHEBI:29108"/>
        <label>4</label>
    </ligand>
</feature>
<feature type="binding site" evidence="4">
    <location>
        <position position="512"/>
    </location>
    <ligand>
        <name>Ca(2+)</name>
        <dbReference type="ChEBI" id="CHEBI:29108"/>
        <label>4</label>
    </ligand>
</feature>
<feature type="binding site" evidence="4">
    <location>
        <position position="514"/>
    </location>
    <ligand>
        <name>Ca(2+)</name>
        <dbReference type="ChEBI" id="CHEBI:29108"/>
        <label>4</label>
    </ligand>
</feature>
<feature type="binding site" evidence="4">
    <location>
        <position position="519"/>
    </location>
    <ligand>
        <name>Ca(2+)</name>
        <dbReference type="ChEBI" id="CHEBI:29108"/>
        <label>4</label>
    </ligand>
</feature>
<feature type="lipid moiety-binding region" description="N-myristoyl glycine" evidence="2">
    <location>
        <position position="2"/>
    </location>
</feature>
<feature type="splice variant" id="VSP_058555" description="In isoform 2.">
    <location>
        <begin position="51"/>
        <end position="85"/>
    </location>
</feature>
<dbReference type="EC" id="2.7.11.1" evidence="13"/>
<dbReference type="EMBL" id="AB042550">
    <property type="protein sequence ID" value="BAB16888.1"/>
    <property type="molecule type" value="mRNA"/>
</dbReference>
<dbReference type="EMBL" id="AL662957">
    <property type="protein sequence ID" value="CAE03753.2"/>
    <property type="molecule type" value="Genomic_DNA"/>
</dbReference>
<dbReference type="EMBL" id="AP008210">
    <property type="protein sequence ID" value="BAF15584.1"/>
    <property type="molecule type" value="Genomic_DNA"/>
</dbReference>
<dbReference type="EMBL" id="AP014960">
    <property type="protein sequence ID" value="BAS90683.1"/>
    <property type="molecule type" value="Genomic_DNA"/>
</dbReference>
<dbReference type="EMBL" id="AP014960">
    <property type="protein sequence ID" value="BAS90684.1"/>
    <property type="molecule type" value="Genomic_DNA"/>
</dbReference>
<dbReference type="EMBL" id="AK061881">
    <property type="protein sequence ID" value="BAG88162.1"/>
    <property type="molecule type" value="mRNA"/>
</dbReference>
<dbReference type="RefSeq" id="NP_001389343.1">
    <molecule id="Q9FXQ3-1"/>
    <property type="nucleotide sequence ID" value="NM_001402414.1"/>
</dbReference>
<dbReference type="RefSeq" id="XP_015635476.1">
    <property type="nucleotide sequence ID" value="XM_015779990.1"/>
</dbReference>
<dbReference type="SMR" id="Q9FXQ3"/>
<dbReference type="FunCoup" id="Q9FXQ3">
    <property type="interactions" value="2290"/>
</dbReference>
<dbReference type="STRING" id="39947.Q9FXQ3"/>
<dbReference type="PaxDb" id="39947-Q9FXQ3"/>
<dbReference type="EnsemblPlants" id="Os04t0584600-02">
    <molecule id="Q9FXQ3-1"/>
    <property type="protein sequence ID" value="Os04t0584600-02"/>
    <property type="gene ID" value="Os04g0584600"/>
</dbReference>
<dbReference type="GeneID" id="4336783"/>
<dbReference type="Gramene" id="Os04t0584600-02">
    <molecule id="Q9FXQ3-1"/>
    <property type="protein sequence ID" value="Os04t0584600-02"/>
    <property type="gene ID" value="Os04g0584600"/>
</dbReference>
<dbReference type="KEGG" id="dosa:Os04g0584600"/>
<dbReference type="eggNOG" id="KOG0032">
    <property type="taxonomic scope" value="Eukaryota"/>
</dbReference>
<dbReference type="HOGENOM" id="CLU_000288_37_3_1"/>
<dbReference type="InParanoid" id="Q9FXQ3"/>
<dbReference type="OMA" id="ACADHNM"/>
<dbReference type="OrthoDB" id="40902at2759"/>
<dbReference type="PlantReactome" id="R-ADU-9607185">
    <property type="pathway name" value="Generation of superoxide radicals"/>
</dbReference>
<dbReference type="PlantReactome" id="R-AHA-9607185">
    <property type="pathway name" value="Generation of superoxide radicals"/>
</dbReference>
<dbReference type="PlantReactome" id="R-AIP-9607185">
    <property type="pathway name" value="Generation of superoxide radicals"/>
</dbReference>
<dbReference type="PlantReactome" id="R-ALY-9607185">
    <property type="pathway name" value="Generation of superoxide radicals"/>
</dbReference>
<dbReference type="PlantReactome" id="R-ATA-9607185">
    <property type="pathway name" value="Generation of superoxide radicals"/>
</dbReference>
<dbReference type="PlantReactome" id="R-ATH-9607185">
    <property type="pathway name" value="Generation of superoxide radicals"/>
</dbReference>
<dbReference type="PlantReactome" id="R-BDI-9607185">
    <property type="pathway name" value="Generation of superoxide radicals"/>
</dbReference>
<dbReference type="PlantReactome" id="R-BJU-9607185">
    <property type="pathway name" value="Generation of superoxide radicals"/>
</dbReference>
<dbReference type="PlantReactome" id="R-BNA-9607185">
    <property type="pathway name" value="Generation of superoxide radicals"/>
</dbReference>
<dbReference type="PlantReactome" id="R-BOL-9607185">
    <property type="pathway name" value="Generation of superoxide radicals"/>
</dbReference>
<dbReference type="PlantReactome" id="R-BRA-9607185">
    <property type="pathway name" value="Generation of superoxide radicals"/>
</dbReference>
<dbReference type="PlantReactome" id="R-BVU-9607185">
    <property type="pathway name" value="Generation of superoxide radicals"/>
</dbReference>
<dbReference type="PlantReactome" id="R-CAN-9607185">
    <property type="pathway name" value="Generation of superoxide radicals"/>
</dbReference>
<dbReference type="PlantReactome" id="R-CAR-9607185">
    <property type="pathway name" value="Generation of superoxide radicals"/>
</dbReference>
<dbReference type="PlantReactome" id="R-CCA-9607185">
    <property type="pathway name" value="Generation of superoxide radicals"/>
</dbReference>
<dbReference type="PlantReactome" id="R-CCI-9607185">
    <property type="pathway name" value="Generation of superoxide radicals"/>
</dbReference>
<dbReference type="PlantReactome" id="R-CCL-9607185">
    <property type="pathway name" value="Generation of superoxide radicals"/>
</dbReference>
<dbReference type="PlantReactome" id="R-CCN-9607185">
    <property type="pathway name" value="Generation of superoxide radicals"/>
</dbReference>
<dbReference type="PlantReactome" id="R-CCP-9607185">
    <property type="pathway name" value="Generation of superoxide radicals"/>
</dbReference>
<dbReference type="PlantReactome" id="R-CLA-9607185">
    <property type="pathway name" value="Generation of superoxide radicals"/>
</dbReference>
<dbReference type="PlantReactome" id="R-CML-9607185">
    <property type="pathway name" value="Generation of superoxide radicals"/>
</dbReference>
<dbReference type="PlantReactome" id="R-COL-9607185">
    <property type="pathway name" value="Generation of superoxide radicals"/>
</dbReference>
<dbReference type="PlantReactome" id="R-CQI-9607185">
    <property type="pathway name" value="Generation of superoxide radicals"/>
</dbReference>
<dbReference type="PlantReactome" id="R-CRU-9607185">
    <property type="pathway name" value="Generation of superoxide radicals"/>
</dbReference>
<dbReference type="PlantReactome" id="R-CSA-9607185">
    <property type="pathway name" value="Generation of superoxide radicals"/>
</dbReference>
<dbReference type="PlantReactome" id="R-CSC-9607185">
    <property type="pathway name" value="Generation of superoxide radicals"/>
</dbReference>
<dbReference type="PlantReactome" id="R-CSI-9607185">
    <property type="pathway name" value="Generation of superoxide radicals"/>
</dbReference>
<dbReference type="PlantReactome" id="R-CSK-9607185">
    <property type="pathway name" value="Generation of superoxide radicals"/>
</dbReference>
<dbReference type="PlantReactome" id="R-CST-9607185">
    <property type="pathway name" value="Generation of superoxide radicals"/>
</dbReference>
<dbReference type="PlantReactome" id="R-DCA-9607185">
    <property type="pathway name" value="Generation of superoxide radicals"/>
</dbReference>
<dbReference type="PlantReactome" id="R-DEX-9607185">
    <property type="pathway name" value="Generation of superoxide radicals"/>
</dbReference>
<dbReference type="PlantReactome" id="R-ECU-9607185">
    <property type="pathway name" value="Generation of superoxide radicals"/>
</dbReference>
<dbReference type="PlantReactome" id="R-EGR-9607185">
    <property type="pathway name" value="Generation of superoxide radicals"/>
</dbReference>
<dbReference type="PlantReactome" id="R-FCR-9607185">
    <property type="pathway name" value="Generation of superoxide radicals"/>
</dbReference>
<dbReference type="PlantReactome" id="R-FVE-9607185">
    <property type="pathway name" value="Generation of superoxide radicals"/>
</dbReference>
<dbReference type="PlantReactome" id="R-GMA-9607185">
    <property type="pathway name" value="Generation of superoxide radicals"/>
</dbReference>
<dbReference type="PlantReactome" id="R-GRA-9607185">
    <property type="pathway name" value="Generation of superoxide radicals"/>
</dbReference>
<dbReference type="PlantReactome" id="R-HLP-9607185">
    <property type="pathway name" value="Generation of superoxide radicals"/>
</dbReference>
<dbReference type="PlantReactome" id="R-HVU-9607185">
    <property type="pathway name" value="Generation of superoxide radicals"/>
</dbReference>
<dbReference type="PlantReactome" id="R-ITR-9607185">
    <property type="pathway name" value="Generation of superoxide radicals"/>
</dbReference>
<dbReference type="PlantReactome" id="R-JCU-9607185">
    <property type="pathway name" value="Generation of superoxide radicals"/>
</dbReference>
<dbReference type="PlantReactome" id="R-JRE-9607185">
    <property type="pathway name" value="Generation of superoxide radicals"/>
</dbReference>
<dbReference type="PlantReactome" id="R-LAN-9607185">
    <property type="pathway name" value="Generation of superoxide radicals"/>
</dbReference>
<dbReference type="PlantReactome" id="R-LPE-9607185">
    <property type="pathway name" value="Generation of superoxide radicals"/>
</dbReference>
<dbReference type="PlantReactome" id="R-LPR-9607185">
    <property type="pathway name" value="Generation of superoxide radicals"/>
</dbReference>
<dbReference type="PlantReactome" id="R-MAC-9607185">
    <property type="pathway name" value="Generation of superoxide radicals"/>
</dbReference>
<dbReference type="PlantReactome" id="R-MES-9607185">
    <property type="pathway name" value="Generation of superoxide radicals"/>
</dbReference>
<dbReference type="PlantReactome" id="R-MGU-9607185">
    <property type="pathway name" value="Generation of superoxide radicals"/>
</dbReference>
<dbReference type="PlantReactome" id="R-MTR-9607185">
    <property type="pathway name" value="Generation of superoxide radicals"/>
</dbReference>
<dbReference type="PlantReactome" id="R-NAT-9607185">
    <property type="pathway name" value="Generation of superoxide radicals"/>
</dbReference>
<dbReference type="PlantReactome" id="R-NNU-9607185">
    <property type="pathway name" value="Generation of superoxide radicals"/>
</dbReference>
<dbReference type="PlantReactome" id="R-OAU-9607185">
    <property type="pathway name" value="Generation of superoxide radicals"/>
</dbReference>
<dbReference type="PlantReactome" id="R-OBA-9607185">
    <property type="pathway name" value="Generation of superoxide radicals"/>
</dbReference>
<dbReference type="PlantReactome" id="R-OBR-9607185">
    <property type="pathway name" value="Generation of superoxide radicals"/>
</dbReference>
<dbReference type="PlantReactome" id="R-OGL-9607185">
    <property type="pathway name" value="Generation of superoxide radicals"/>
</dbReference>
<dbReference type="PlantReactome" id="R-OGR-9607185">
    <property type="pathway name" value="Generation of superoxide radicals"/>
</dbReference>
<dbReference type="PlantReactome" id="R-OGU-9607185">
    <property type="pathway name" value="Generation of superoxide radicals"/>
</dbReference>
<dbReference type="PlantReactome" id="R-OLO-9607185">
    <property type="pathway name" value="Generation of superoxide radicals"/>
</dbReference>
<dbReference type="PlantReactome" id="R-OME-9607185">
    <property type="pathway name" value="Generation of superoxide radicals"/>
</dbReference>
<dbReference type="PlantReactome" id="R-OMI-9607185">
    <property type="pathway name" value="Generation of superoxide radicals"/>
</dbReference>
<dbReference type="PlantReactome" id="R-ONI-9607185">
    <property type="pathway name" value="Generation of superoxide radicals"/>
</dbReference>
<dbReference type="PlantReactome" id="R-OOF-9607185">
    <property type="pathway name" value="Generation of superoxide radicals"/>
</dbReference>
<dbReference type="PlantReactome" id="R-OPU-9607185">
    <property type="pathway name" value="Generation of superoxide radicals"/>
</dbReference>
<dbReference type="PlantReactome" id="R-ORU-9607185">
    <property type="pathway name" value="Generation of superoxide radicals"/>
</dbReference>
<dbReference type="PlantReactome" id="R-OSA-3899351">
    <property type="pathway name" value="Abscisic acid (ABA) mediated signaling"/>
</dbReference>
<dbReference type="PlantReactome" id="R-OSA-9607185">
    <property type="pathway name" value="Generation of superoxide radicals"/>
</dbReference>
<dbReference type="PlantReactome" id="R-OSI-9607185">
    <property type="pathway name" value="Generation of superoxide radicals"/>
</dbReference>
<dbReference type="PlantReactome" id="R-PAB-9607185">
    <property type="pathway name" value="Generation of superoxide radicals"/>
</dbReference>
<dbReference type="PlantReactome" id="R-PAV-9607185">
    <property type="pathway name" value="Generation of superoxide radicals"/>
</dbReference>
<dbReference type="PlantReactome" id="R-PDA-9607185">
    <property type="pathway name" value="Generation of superoxide radicals"/>
</dbReference>
<dbReference type="PlantReactome" id="R-PED-9607185">
    <property type="pathway name" value="Generation of superoxide radicals"/>
</dbReference>
<dbReference type="PlantReactome" id="R-PHA-9607185">
    <property type="pathway name" value="Generation of superoxide radicals"/>
</dbReference>
<dbReference type="PlantReactome" id="R-PHH-9607185">
    <property type="pathway name" value="Generation of superoxide radicals"/>
</dbReference>
<dbReference type="PlantReactome" id="R-PPE-9607185">
    <property type="pathway name" value="Generation of superoxide radicals"/>
</dbReference>
<dbReference type="PlantReactome" id="R-PSA-9607185">
    <property type="pathway name" value="Generation of superoxide radicals"/>
</dbReference>
<dbReference type="PlantReactome" id="R-PTA-9607185">
    <property type="pathway name" value="Generation of superoxide radicals"/>
</dbReference>
<dbReference type="PlantReactome" id="R-PTI-9607185">
    <property type="pathway name" value="Generation of superoxide radicals"/>
</dbReference>
<dbReference type="PlantReactome" id="R-PVE-9607185">
    <property type="pathway name" value="Generation of superoxide radicals"/>
</dbReference>
<dbReference type="PlantReactome" id="R-PVU-9607185">
    <property type="pathway name" value="Generation of superoxide radicals"/>
</dbReference>
<dbReference type="PlantReactome" id="R-QLO-9607185">
    <property type="pathway name" value="Generation of superoxide radicals"/>
</dbReference>
<dbReference type="PlantReactome" id="R-QSU-9607185">
    <property type="pathway name" value="Generation of superoxide radicals"/>
</dbReference>
<dbReference type="PlantReactome" id="R-RCH-9607185">
    <property type="pathway name" value="Generation of superoxide radicals"/>
</dbReference>
<dbReference type="PlantReactome" id="R-SBI-9607185">
    <property type="pathway name" value="Generation of superoxide radicals"/>
</dbReference>
<dbReference type="PlantReactome" id="R-SCR-9607185">
    <property type="pathway name" value="Generation of superoxide radicals"/>
</dbReference>
<dbReference type="PlantReactome" id="R-SHI-9607185">
    <property type="pathway name" value="Generation of superoxide radicals"/>
</dbReference>
<dbReference type="PlantReactome" id="R-SIT-9607185">
    <property type="pathway name" value="Generation of superoxide radicals"/>
</dbReference>
<dbReference type="PlantReactome" id="R-SLY-9607185">
    <property type="pathway name" value="Generation of superoxide radicals"/>
</dbReference>
<dbReference type="PlantReactome" id="R-STU-9607185">
    <property type="pathway name" value="Generation of superoxide radicals"/>
</dbReference>
<dbReference type="PlantReactome" id="R-SVI-9607185">
    <property type="pathway name" value="Generation of superoxide radicals"/>
</dbReference>
<dbReference type="PlantReactome" id="R-TAE-9607185">
    <property type="pathway name" value="Generation of superoxide radicals"/>
</dbReference>
<dbReference type="PlantReactome" id="R-TCA-9607185">
    <property type="pathway name" value="Generation of superoxide radicals"/>
</dbReference>
<dbReference type="PlantReactome" id="R-TDI-9607185">
    <property type="pathway name" value="Generation of superoxide radicals"/>
</dbReference>
<dbReference type="PlantReactome" id="R-TPR-9607185">
    <property type="pathway name" value="Generation of superoxide radicals"/>
</dbReference>
<dbReference type="PlantReactome" id="R-TTU-9607185">
    <property type="pathway name" value="Generation of superoxide radicals"/>
</dbReference>
<dbReference type="PlantReactome" id="R-TUR-9607185">
    <property type="pathway name" value="Generation of superoxide radicals"/>
</dbReference>
<dbReference type="PlantReactome" id="R-VAN-9607185">
    <property type="pathway name" value="Generation of superoxide radicals"/>
</dbReference>
<dbReference type="PlantReactome" id="R-VRA-9607185">
    <property type="pathway name" value="Generation of superoxide radicals"/>
</dbReference>
<dbReference type="PlantReactome" id="R-VUN-9607185">
    <property type="pathway name" value="Generation of superoxide radicals"/>
</dbReference>
<dbReference type="PlantReactome" id="R-VVN-9607185">
    <property type="pathway name" value="Generation of superoxide radicals"/>
</dbReference>
<dbReference type="PlantReactome" id="R-ZJA-9607185">
    <property type="pathway name" value="Generation of superoxide radicals"/>
</dbReference>
<dbReference type="PlantReactome" id="R-ZMA-9607185">
    <property type="pathway name" value="Generation of superoxide radicals"/>
</dbReference>
<dbReference type="PlantReactome" id="R-ZMY-9607185">
    <property type="pathway name" value="Generation of superoxide radicals"/>
</dbReference>
<dbReference type="Proteomes" id="UP000000763">
    <property type="component" value="Chromosome 4"/>
</dbReference>
<dbReference type="Proteomes" id="UP000059680">
    <property type="component" value="Chromosome 4"/>
</dbReference>
<dbReference type="ExpressionAtlas" id="Q9FXQ3">
    <property type="expression patterns" value="baseline and differential"/>
</dbReference>
<dbReference type="GO" id="GO:0005737">
    <property type="term" value="C:cytoplasm"/>
    <property type="evidence" value="ECO:0000318"/>
    <property type="project" value="GO_Central"/>
</dbReference>
<dbReference type="GO" id="GO:0016020">
    <property type="term" value="C:membrane"/>
    <property type="evidence" value="ECO:0007669"/>
    <property type="project" value="UniProtKB-SubCell"/>
</dbReference>
<dbReference type="GO" id="GO:0005634">
    <property type="term" value="C:nucleus"/>
    <property type="evidence" value="ECO:0000318"/>
    <property type="project" value="GO_Central"/>
</dbReference>
<dbReference type="GO" id="GO:0005524">
    <property type="term" value="F:ATP binding"/>
    <property type="evidence" value="ECO:0007669"/>
    <property type="project" value="UniProtKB-KW"/>
</dbReference>
<dbReference type="GO" id="GO:0005509">
    <property type="term" value="F:calcium ion binding"/>
    <property type="evidence" value="ECO:0007669"/>
    <property type="project" value="InterPro"/>
</dbReference>
<dbReference type="GO" id="GO:0009931">
    <property type="term" value="F:calcium-dependent protein serine/threonine kinase activity"/>
    <property type="evidence" value="ECO:0000318"/>
    <property type="project" value="GO_Central"/>
</dbReference>
<dbReference type="GO" id="GO:0004683">
    <property type="term" value="F:calcium/calmodulin-dependent protein kinase activity"/>
    <property type="evidence" value="ECO:0000318"/>
    <property type="project" value="GO_Central"/>
</dbReference>
<dbReference type="GO" id="GO:0005516">
    <property type="term" value="F:calmodulin binding"/>
    <property type="evidence" value="ECO:0000318"/>
    <property type="project" value="GO_Central"/>
</dbReference>
<dbReference type="GO" id="GO:0106310">
    <property type="term" value="F:protein serine kinase activity"/>
    <property type="evidence" value="ECO:0007669"/>
    <property type="project" value="RHEA"/>
</dbReference>
<dbReference type="GO" id="GO:0035556">
    <property type="term" value="P:intracellular signal transduction"/>
    <property type="evidence" value="ECO:0000318"/>
    <property type="project" value="GO_Central"/>
</dbReference>
<dbReference type="GO" id="GO:1901002">
    <property type="term" value="P:positive regulation of response to salt stress"/>
    <property type="evidence" value="ECO:0000315"/>
    <property type="project" value="UniProtKB"/>
</dbReference>
<dbReference type="GO" id="GO:0009409">
    <property type="term" value="P:response to cold"/>
    <property type="evidence" value="ECO:0000315"/>
    <property type="project" value="UniProtKB"/>
</dbReference>
<dbReference type="GO" id="GO:0009414">
    <property type="term" value="P:response to water deprivation"/>
    <property type="evidence" value="ECO:0000315"/>
    <property type="project" value="UniProtKB"/>
</dbReference>
<dbReference type="CDD" id="cd00051">
    <property type="entry name" value="EFh"/>
    <property type="match status" value="1"/>
</dbReference>
<dbReference type="CDD" id="cd05117">
    <property type="entry name" value="STKc_CAMK"/>
    <property type="match status" value="1"/>
</dbReference>
<dbReference type="FunFam" id="1.10.238.10:FF:000015">
    <property type="entry name" value="Calcium-dependent protein kinase 1"/>
    <property type="match status" value="1"/>
</dbReference>
<dbReference type="FunFam" id="3.30.200.20:FF:000004">
    <property type="entry name" value="Calcium-dependent protein kinase 1"/>
    <property type="match status" value="1"/>
</dbReference>
<dbReference type="FunFam" id="1.10.510.10:FF:000178">
    <property type="entry name" value="Calcium-dependent protein kinase 5"/>
    <property type="match status" value="1"/>
</dbReference>
<dbReference type="Gene3D" id="1.10.238.10">
    <property type="entry name" value="EF-hand"/>
    <property type="match status" value="1"/>
</dbReference>
<dbReference type="Gene3D" id="3.30.200.20">
    <property type="entry name" value="Phosphorylase Kinase, domain 1"/>
    <property type="match status" value="1"/>
</dbReference>
<dbReference type="Gene3D" id="1.10.510.10">
    <property type="entry name" value="Transferase(Phosphotransferase) domain 1"/>
    <property type="match status" value="1"/>
</dbReference>
<dbReference type="InterPro" id="IPR050205">
    <property type="entry name" value="CDPK_Ser/Thr_kinases"/>
</dbReference>
<dbReference type="InterPro" id="IPR011992">
    <property type="entry name" value="EF-hand-dom_pair"/>
</dbReference>
<dbReference type="InterPro" id="IPR018247">
    <property type="entry name" value="EF_Hand_1_Ca_BS"/>
</dbReference>
<dbReference type="InterPro" id="IPR002048">
    <property type="entry name" value="EF_hand_dom"/>
</dbReference>
<dbReference type="InterPro" id="IPR011009">
    <property type="entry name" value="Kinase-like_dom_sf"/>
</dbReference>
<dbReference type="InterPro" id="IPR000719">
    <property type="entry name" value="Prot_kinase_dom"/>
</dbReference>
<dbReference type="InterPro" id="IPR017441">
    <property type="entry name" value="Protein_kinase_ATP_BS"/>
</dbReference>
<dbReference type="InterPro" id="IPR008271">
    <property type="entry name" value="Ser/Thr_kinase_AS"/>
</dbReference>
<dbReference type="PANTHER" id="PTHR24349">
    <property type="entry name" value="SERINE/THREONINE-PROTEIN KINASE"/>
    <property type="match status" value="1"/>
</dbReference>
<dbReference type="Pfam" id="PF13499">
    <property type="entry name" value="EF-hand_7"/>
    <property type="match status" value="2"/>
</dbReference>
<dbReference type="Pfam" id="PF00069">
    <property type="entry name" value="Pkinase"/>
    <property type="match status" value="1"/>
</dbReference>
<dbReference type="SMART" id="SM00054">
    <property type="entry name" value="EFh"/>
    <property type="match status" value="4"/>
</dbReference>
<dbReference type="SMART" id="SM00220">
    <property type="entry name" value="S_TKc"/>
    <property type="match status" value="1"/>
</dbReference>
<dbReference type="SUPFAM" id="SSF47473">
    <property type="entry name" value="EF-hand"/>
    <property type="match status" value="1"/>
</dbReference>
<dbReference type="SUPFAM" id="SSF56112">
    <property type="entry name" value="Protein kinase-like (PK-like)"/>
    <property type="match status" value="1"/>
</dbReference>
<dbReference type="PROSITE" id="PS00018">
    <property type="entry name" value="EF_HAND_1"/>
    <property type="match status" value="4"/>
</dbReference>
<dbReference type="PROSITE" id="PS50222">
    <property type="entry name" value="EF_HAND_2"/>
    <property type="match status" value="4"/>
</dbReference>
<dbReference type="PROSITE" id="PS00107">
    <property type="entry name" value="PROTEIN_KINASE_ATP"/>
    <property type="match status" value="1"/>
</dbReference>
<dbReference type="PROSITE" id="PS50011">
    <property type="entry name" value="PROTEIN_KINASE_DOM"/>
    <property type="match status" value="1"/>
</dbReference>
<dbReference type="PROSITE" id="PS00108">
    <property type="entry name" value="PROTEIN_KINASE_ST"/>
    <property type="match status" value="1"/>
</dbReference>
<gene>
    <name evidence="12" type="primary">CPK13</name>
    <name evidence="14" type="ordered locus">Os04g0584600</name>
    <name evidence="13" type="ordered locus">LOC_Os04g49510</name>
    <name evidence="15" type="ORF">OSJNBa0013K16.2</name>
</gene>
<accession>Q9FXQ3</accession>
<accession>Q0JAQ3</accession>
<accession>Q7X828</accession>
<sequence length="551" mass="60966">MGNACGGSLRSKYLSFKQTASQRHDTDDNNNAAAADSPKKPSRPPAAAKTDDHPVSASAPAAAMRRGQAPADLGSVLGHPTPNLRDLYAMGRKLGQGQFGTTYLCTELSTGVDYACKSISKRKLITKEDIEDVRREIQIMHHLSGHKNVVAIKGAYEDQLYVHIVMELCAGGELFDRIIQRGHYSERKAAELTRIIVGVVEACHSLGVMHRDLKPENFLLANKDDDLSLKAIDFGLSVFFKPGQTFTDVVGSPYYVAPEVLLKHYGPEADVWTAGVILYILLSGVPPFWAETQQGIFDAVLKGFIDFDSDPWPVISESAKDLITKMLNPRPKERLTAHEVLCHPWIRDHGVAPDRPLDPAVLSRIKQFSAMNKLKKMALRVIAESLSEEEIAGLKEMFQTMDADNSGAITYDELKEGLRKYGSTLKDTEIRDLMDAADIDNSGTIDYIEFIAATLHLNKLEREEHLVAAFSYFDKDGSGYITVDELQQACKEHNMPDAFLDDVINEADQDNDGRIDYGEFVAMMTKGNMGVGRRTMRNSLNISMRDAPGAL</sequence>
<comment type="function">
    <text evidence="1 6">May play a role in signal transduction pathways that involve calcium as a second messenger (By similarity). May function in signal transduction pathways that positively regulate responses to cold, salt and drought stresses (PubMed:10929125).</text>
</comment>
<comment type="catalytic activity">
    <reaction evidence="13">
        <text>L-seryl-[protein] + ATP = O-phospho-L-seryl-[protein] + ADP + H(+)</text>
        <dbReference type="Rhea" id="RHEA:17989"/>
        <dbReference type="Rhea" id="RHEA-COMP:9863"/>
        <dbReference type="Rhea" id="RHEA-COMP:11604"/>
        <dbReference type="ChEBI" id="CHEBI:15378"/>
        <dbReference type="ChEBI" id="CHEBI:29999"/>
        <dbReference type="ChEBI" id="CHEBI:30616"/>
        <dbReference type="ChEBI" id="CHEBI:83421"/>
        <dbReference type="ChEBI" id="CHEBI:456216"/>
        <dbReference type="EC" id="2.7.11.1"/>
    </reaction>
</comment>
<comment type="catalytic activity">
    <reaction evidence="13">
        <text>L-threonyl-[protein] + ATP = O-phospho-L-threonyl-[protein] + ADP + H(+)</text>
        <dbReference type="Rhea" id="RHEA:46608"/>
        <dbReference type="Rhea" id="RHEA-COMP:11060"/>
        <dbReference type="Rhea" id="RHEA-COMP:11605"/>
        <dbReference type="ChEBI" id="CHEBI:15378"/>
        <dbReference type="ChEBI" id="CHEBI:30013"/>
        <dbReference type="ChEBI" id="CHEBI:30616"/>
        <dbReference type="ChEBI" id="CHEBI:61977"/>
        <dbReference type="ChEBI" id="CHEBI:456216"/>
        <dbReference type="EC" id="2.7.11.1"/>
    </reaction>
</comment>
<comment type="activity regulation">
    <text evidence="1">Activated by calcium. Autophosphorylation may play an important role in the regulation of the kinase activity.</text>
</comment>
<comment type="subcellular location">
    <subcellularLocation>
        <location evidence="13">Membrane</location>
        <topology evidence="13">Lipid-anchor</topology>
    </subcellularLocation>
</comment>
<comment type="alternative products">
    <event type="alternative splicing"/>
    <isoform>
        <id>Q9FXQ3-1</id>
        <name>1</name>
        <sequence type="displayed"/>
    </isoform>
    <isoform>
        <id>Q9FXQ3-2</id>
        <name>2</name>
        <sequence type="described" ref="VSP_058555"/>
    </isoform>
</comment>
<comment type="tissue specificity">
    <text evidence="7 9">Expressed in vascular tissues of crowns and roots, vascular bundles and central cylinder (PubMed:11726707). Expressed in roots, leaf blades, spikelets and developing seeds (PubMed:21136139).</text>
</comment>
<comment type="induction">
    <text evidence="6 8 10">By cold and salt stresses (PubMed:10929125). Induced by N-acetylchitooligosaccharide elicitor (PubMed:12956525). Induced by UV-C (PubMed:24035516).</text>
</comment>
<comment type="domain">
    <text evidence="1">There are 3 contiguous domains conserved in the CDPK subfamily: a kinase domain, an autoinhibitory (junction) domain and a calmodulin-like domain. The autoinhibitory domain (352-382) inactivates kinase activity under calcium-free conditions.</text>
</comment>
<comment type="miscellaneous">
    <text evidence="6">Plants over-expressing CPK13 display enhanced tolerance to cold, drought and salt stresses.</text>
</comment>
<comment type="similarity">
    <text evidence="13">Belongs to the protein kinase superfamily. Ser/Thr protein kinase family. CDPK subfamily.</text>
</comment>
<evidence type="ECO:0000250" key="1">
    <source>
        <dbReference type="UniProtKB" id="Q06850"/>
    </source>
</evidence>
<evidence type="ECO:0000255" key="2"/>
<evidence type="ECO:0000255" key="3">
    <source>
        <dbReference type="PROSITE-ProRule" id="PRU00159"/>
    </source>
</evidence>
<evidence type="ECO:0000255" key="4">
    <source>
        <dbReference type="PROSITE-ProRule" id="PRU00448"/>
    </source>
</evidence>
<evidence type="ECO:0000256" key="5">
    <source>
        <dbReference type="SAM" id="MobiDB-lite"/>
    </source>
</evidence>
<evidence type="ECO:0000269" key="6">
    <source>
    </source>
</evidence>
<evidence type="ECO:0000269" key="7">
    <source>
    </source>
</evidence>
<evidence type="ECO:0000269" key="8">
    <source>
    </source>
</evidence>
<evidence type="ECO:0000269" key="9">
    <source>
    </source>
</evidence>
<evidence type="ECO:0000269" key="10">
    <source>
    </source>
</evidence>
<evidence type="ECO:0000303" key="11">
    <source>
    </source>
</evidence>
<evidence type="ECO:0000303" key="12">
    <source>
    </source>
</evidence>
<evidence type="ECO:0000305" key="13"/>
<evidence type="ECO:0000312" key="14">
    <source>
        <dbReference type="EMBL" id="BAS90683.1"/>
    </source>
</evidence>
<evidence type="ECO:0000312" key="15">
    <source>
        <dbReference type="EMBL" id="CAE03753.2"/>
    </source>
</evidence>
<proteinExistence type="evidence at transcript level"/>
<reference key="1">
    <citation type="journal article" date="2000" name="Plant J.">
        <title>Over-expression of a single Ca2+-dependent protein kinase confers both cold and salt/drought tolerance on rice plants.</title>
        <authorList>
            <person name="Saijo Y."/>
            <person name="Hata S."/>
            <person name="Kyozuka J."/>
            <person name="Shimamoto K."/>
            <person name="Izui K."/>
        </authorList>
    </citation>
    <scope>NUCLEOTIDE SEQUENCE [MRNA] (ISOFORM 1)</scope>
    <scope>FUNCTION</scope>
    <scope>INDUCTION</scope>
    <source>
        <strain>cv. Nipponbare</strain>
    </source>
</reference>
<reference key="2">
    <citation type="journal article" date="2002" name="Nature">
        <title>Sequence and analysis of rice chromosome 4.</title>
        <authorList>
            <person name="Feng Q."/>
            <person name="Zhang Y."/>
            <person name="Hao P."/>
            <person name="Wang S."/>
            <person name="Fu G."/>
            <person name="Huang Y."/>
            <person name="Li Y."/>
            <person name="Zhu J."/>
            <person name="Liu Y."/>
            <person name="Hu X."/>
            <person name="Jia P."/>
            <person name="Zhang Y."/>
            <person name="Zhao Q."/>
            <person name="Ying K."/>
            <person name="Yu S."/>
            <person name="Tang Y."/>
            <person name="Weng Q."/>
            <person name="Zhang L."/>
            <person name="Lu Y."/>
            <person name="Mu J."/>
            <person name="Lu Y."/>
            <person name="Zhang L.S."/>
            <person name="Yu Z."/>
            <person name="Fan D."/>
            <person name="Liu X."/>
            <person name="Lu T."/>
            <person name="Li C."/>
            <person name="Wu Y."/>
            <person name="Sun T."/>
            <person name="Lei H."/>
            <person name="Li T."/>
            <person name="Hu H."/>
            <person name="Guan J."/>
            <person name="Wu M."/>
            <person name="Zhang R."/>
            <person name="Zhou B."/>
            <person name="Chen Z."/>
            <person name="Chen L."/>
            <person name="Jin Z."/>
            <person name="Wang R."/>
            <person name="Yin H."/>
            <person name="Cai Z."/>
            <person name="Ren S."/>
            <person name="Lv G."/>
            <person name="Gu W."/>
            <person name="Zhu G."/>
            <person name="Tu Y."/>
            <person name="Jia J."/>
            <person name="Zhang Y."/>
            <person name="Chen J."/>
            <person name="Kang H."/>
            <person name="Chen X."/>
            <person name="Shao C."/>
            <person name="Sun Y."/>
            <person name="Hu Q."/>
            <person name="Zhang X."/>
            <person name="Zhang W."/>
            <person name="Wang L."/>
            <person name="Ding C."/>
            <person name="Sheng H."/>
            <person name="Gu J."/>
            <person name="Chen S."/>
            <person name="Ni L."/>
            <person name="Zhu F."/>
            <person name="Chen W."/>
            <person name="Lan L."/>
            <person name="Lai Y."/>
            <person name="Cheng Z."/>
            <person name="Gu M."/>
            <person name="Jiang J."/>
            <person name="Li J."/>
            <person name="Hong G."/>
            <person name="Xue Y."/>
            <person name="Han B."/>
        </authorList>
    </citation>
    <scope>NUCLEOTIDE SEQUENCE [LARGE SCALE GENOMIC DNA]</scope>
    <source>
        <strain>cv. Nipponbare</strain>
    </source>
</reference>
<reference key="3">
    <citation type="journal article" date="2005" name="Nature">
        <title>The map-based sequence of the rice genome.</title>
        <authorList>
            <consortium name="International rice genome sequencing project (IRGSP)"/>
        </authorList>
    </citation>
    <scope>NUCLEOTIDE SEQUENCE [LARGE SCALE GENOMIC DNA]</scope>
    <source>
        <strain>cv. Nipponbare</strain>
    </source>
</reference>
<reference key="4">
    <citation type="journal article" date="2008" name="Nucleic Acids Res.">
        <title>The rice annotation project database (RAP-DB): 2008 update.</title>
        <authorList>
            <consortium name="The rice annotation project (RAP)"/>
        </authorList>
    </citation>
    <scope>GENOME REANNOTATION</scope>
    <source>
        <strain>cv. Nipponbare</strain>
    </source>
</reference>
<reference key="5">
    <citation type="journal article" date="2013" name="Rice">
        <title>Improvement of the Oryza sativa Nipponbare reference genome using next generation sequence and optical map data.</title>
        <authorList>
            <person name="Kawahara Y."/>
            <person name="de la Bastide M."/>
            <person name="Hamilton J.P."/>
            <person name="Kanamori H."/>
            <person name="McCombie W.R."/>
            <person name="Ouyang S."/>
            <person name="Schwartz D.C."/>
            <person name="Tanaka T."/>
            <person name="Wu J."/>
            <person name="Zhou S."/>
            <person name="Childs K.L."/>
            <person name="Davidson R.M."/>
            <person name="Lin H."/>
            <person name="Quesada-Ocampo L."/>
            <person name="Vaillancourt B."/>
            <person name="Sakai H."/>
            <person name="Lee S.S."/>
            <person name="Kim J."/>
            <person name="Numa H."/>
            <person name="Itoh T."/>
            <person name="Buell C.R."/>
            <person name="Matsumoto T."/>
        </authorList>
    </citation>
    <scope>GENOME REANNOTATION</scope>
    <source>
        <strain>cv. Nipponbare</strain>
    </source>
</reference>
<reference key="6">
    <citation type="journal article" date="2003" name="Science">
        <title>Collection, mapping, and annotation of over 28,000 cDNA clones from japonica rice.</title>
        <authorList>
            <consortium name="The rice full-length cDNA consortium"/>
        </authorList>
    </citation>
    <scope>NUCLEOTIDE SEQUENCE [LARGE SCALE MRNA] (ISOFORM 1)</scope>
    <source>
        <strain>cv. Nipponbare</strain>
    </source>
</reference>
<reference key="7">
    <citation type="journal article" date="2001" name="Plant Cell Physiol.">
        <title>A Ca(2+)-dependent protein kinase that endows rice plants with cold- and salt-stress tolerance functions in vascular bundles.</title>
        <authorList>
            <person name="Saijo Y."/>
            <person name="Kinoshita N."/>
            <person name="Ishiyama K."/>
            <person name="Hata S."/>
            <person name="Kyozuka J."/>
            <person name="Hayakawa T."/>
            <person name="Nakamura T."/>
            <person name="Shimamoto K."/>
            <person name="Yamaya T."/>
            <person name="Izui K."/>
        </authorList>
    </citation>
    <scope>TISSUE SPECIFICITY</scope>
</reference>
<reference key="8">
    <citation type="journal article" date="2003" name="Plant Mol. Biol.">
        <title>Rice gene expression in response to N-acetylchitooligosaccharide elicitor: comprehensive analysis by DNA microarray with randomly selected ESTs.</title>
        <authorList>
            <person name="Akimoto-Tomiyama C."/>
            <person name="Sakata K."/>
            <person name="Yazaki J."/>
            <person name="Nakamura K."/>
            <person name="Fujii F."/>
            <person name="Shimbo K."/>
            <person name="Yamamoto K."/>
            <person name="Sasaki T."/>
            <person name="Kishimoto N."/>
            <person name="Kikuchi S."/>
            <person name="Shibuya N."/>
            <person name="Minami E."/>
        </authorList>
    </citation>
    <scope>INDUCTION BY N-ACETYLCHITOOLIGOSACCHARIDE ELICITOR</scope>
</reference>
<reference key="9">
    <citation type="journal article" date="2005" name="Plant Cell Physiol.">
        <title>Genome-wide identification of the rice calcium-dependent protein kinase and its closely related kinase gene families: comprehensive analysis of the CDPKs gene family in rice.</title>
        <authorList>
            <person name="Asano T."/>
            <person name="Tanaka N."/>
            <person name="Yang G."/>
            <person name="Hayashi N."/>
            <person name="Komatsu S."/>
        </authorList>
    </citation>
    <scope>GENE FAMILY</scope>
    <scope>NOMENCLATURE</scope>
</reference>
<reference key="10">
    <citation type="journal article" date="2011" name="Plant Mol. Biol.">
        <title>Functional characterisation of OsCPK21, a calcium-dependent protein kinase that confers salt tolerance in rice.</title>
        <authorList>
            <person name="Asano T."/>
            <person name="Hakata M."/>
            <person name="Nakamura H."/>
            <person name="Aoki N."/>
            <person name="Komatsu S."/>
            <person name="Ichikawa H."/>
            <person name="Hirochika H."/>
            <person name="Ohsugi R."/>
        </authorList>
    </citation>
    <scope>TISSUE SPECIFICITY</scope>
</reference>
<reference key="11">
    <citation type="journal article" date="2013" name="Phytochemistry">
        <title>Transcriptomic analysis of UV-treated rice leaves reveals UV-induced phytoalexin biosynthetic pathways and their regulatory networks in rice.</title>
        <authorList>
            <person name="Park H.L."/>
            <person name="Lee S.W."/>
            <person name="Jung K.H."/>
            <person name="Hahn T.R."/>
            <person name="Cho M.H."/>
        </authorList>
    </citation>
    <scope>INDUCTION BY UV-C</scope>
</reference>
<organism>
    <name type="scientific">Oryza sativa subsp. japonica</name>
    <name type="common">Rice</name>
    <dbReference type="NCBI Taxonomy" id="39947"/>
    <lineage>
        <taxon>Eukaryota</taxon>
        <taxon>Viridiplantae</taxon>
        <taxon>Streptophyta</taxon>
        <taxon>Embryophyta</taxon>
        <taxon>Tracheophyta</taxon>
        <taxon>Spermatophyta</taxon>
        <taxon>Magnoliopsida</taxon>
        <taxon>Liliopsida</taxon>
        <taxon>Poales</taxon>
        <taxon>Poaceae</taxon>
        <taxon>BOP clade</taxon>
        <taxon>Oryzoideae</taxon>
        <taxon>Oryzeae</taxon>
        <taxon>Oryzinae</taxon>
        <taxon>Oryza</taxon>
        <taxon>Oryza sativa</taxon>
    </lineage>
</organism>